<comment type="function">
    <text evidence="1">Interacts with the SecY protein in vivo. May bind preferentially to an uncomplexed state of SecY, thus functioning either as a chelating agent for excess SecY in the cell or as a regulatory factor that negatively controls the translocase function.</text>
</comment>
<comment type="subcellular location">
    <subcellularLocation>
        <location evidence="1">Cell inner membrane</location>
        <topology evidence="1">Peripheral membrane protein</topology>
        <orientation evidence="1">Cytoplasmic side</orientation>
    </subcellularLocation>
    <text evidence="1">Loosely associated with the cytoplasmic side of the inner membrane, probably via SecY.</text>
</comment>
<comment type="similarity">
    <text evidence="1">Belongs to the Syd family.</text>
</comment>
<proteinExistence type="inferred from homology"/>
<dbReference type="EMBL" id="CP000243">
    <property type="protein sequence ID" value="ABE08615.1"/>
    <property type="molecule type" value="Genomic_DNA"/>
</dbReference>
<dbReference type="RefSeq" id="WP_000342431.1">
    <property type="nucleotide sequence ID" value="NZ_CP064825.1"/>
</dbReference>
<dbReference type="SMR" id="Q1R7P9"/>
<dbReference type="GeneID" id="93779205"/>
<dbReference type="KEGG" id="eci:UTI89_C3163"/>
<dbReference type="HOGENOM" id="CLU_121866_0_0_6"/>
<dbReference type="Proteomes" id="UP000001952">
    <property type="component" value="Chromosome"/>
</dbReference>
<dbReference type="GO" id="GO:0009898">
    <property type="term" value="C:cytoplasmic side of plasma membrane"/>
    <property type="evidence" value="ECO:0007669"/>
    <property type="project" value="InterPro"/>
</dbReference>
<dbReference type="CDD" id="cd16323">
    <property type="entry name" value="Syd"/>
    <property type="match status" value="1"/>
</dbReference>
<dbReference type="FunFam" id="3.40.1580.20:FF:000001">
    <property type="entry name" value="Protein Syd"/>
    <property type="match status" value="1"/>
</dbReference>
<dbReference type="Gene3D" id="3.40.1580.20">
    <property type="entry name" value="Syd protein"/>
    <property type="match status" value="1"/>
</dbReference>
<dbReference type="HAMAP" id="MF_01104">
    <property type="entry name" value="Syd"/>
    <property type="match status" value="1"/>
</dbReference>
<dbReference type="InterPro" id="IPR009948">
    <property type="entry name" value="Syd"/>
</dbReference>
<dbReference type="InterPro" id="IPR038228">
    <property type="entry name" value="Syd_sf"/>
</dbReference>
<dbReference type="NCBIfam" id="NF003439">
    <property type="entry name" value="PRK04968.1"/>
    <property type="match status" value="1"/>
</dbReference>
<dbReference type="Pfam" id="PF07348">
    <property type="entry name" value="Syd"/>
    <property type="match status" value="1"/>
</dbReference>
<sequence length="181" mass="20708">MDDLTAQALKDFTARYCDAWHEEHKSWPLSEELYGVPSPCIISTTEDAVYWQPQPFTGEQNVNAVERAFDIVIQPTIHTFYTTQFAGDMHAQFGDIKLTLLQTWSEDDFRRVQENLIGHLVTQKRLKLPPTLFIATLEEELEVISVCNLSGEVCKETLGTRKRTHLASNLAEFLNQLKPLL</sequence>
<feature type="chain" id="PRO_0000298248" description="Protein Syd">
    <location>
        <begin position="1"/>
        <end position="181"/>
    </location>
</feature>
<keyword id="KW-0997">Cell inner membrane</keyword>
<keyword id="KW-1003">Cell membrane</keyword>
<keyword id="KW-0472">Membrane</keyword>
<evidence type="ECO:0000255" key="1">
    <source>
        <dbReference type="HAMAP-Rule" id="MF_01104"/>
    </source>
</evidence>
<reference key="1">
    <citation type="journal article" date="2006" name="Proc. Natl. Acad. Sci. U.S.A.">
        <title>Identification of genes subject to positive selection in uropathogenic strains of Escherichia coli: a comparative genomics approach.</title>
        <authorList>
            <person name="Chen S.L."/>
            <person name="Hung C.-S."/>
            <person name="Xu J."/>
            <person name="Reigstad C.S."/>
            <person name="Magrini V."/>
            <person name="Sabo A."/>
            <person name="Blasiar D."/>
            <person name="Bieri T."/>
            <person name="Meyer R.R."/>
            <person name="Ozersky P."/>
            <person name="Armstrong J.R."/>
            <person name="Fulton R.S."/>
            <person name="Latreille J.P."/>
            <person name="Spieth J."/>
            <person name="Hooton T.M."/>
            <person name="Mardis E.R."/>
            <person name="Hultgren S.J."/>
            <person name="Gordon J.I."/>
        </authorList>
    </citation>
    <scope>NUCLEOTIDE SEQUENCE [LARGE SCALE GENOMIC DNA]</scope>
    <source>
        <strain>UTI89 / UPEC</strain>
    </source>
</reference>
<protein>
    <recommendedName>
        <fullName evidence="1">Protein Syd</fullName>
    </recommendedName>
</protein>
<accession>Q1R7P9</accession>
<organism>
    <name type="scientific">Escherichia coli (strain UTI89 / UPEC)</name>
    <dbReference type="NCBI Taxonomy" id="364106"/>
    <lineage>
        <taxon>Bacteria</taxon>
        <taxon>Pseudomonadati</taxon>
        <taxon>Pseudomonadota</taxon>
        <taxon>Gammaproteobacteria</taxon>
        <taxon>Enterobacterales</taxon>
        <taxon>Enterobacteriaceae</taxon>
        <taxon>Escherichia</taxon>
    </lineage>
</organism>
<gene>
    <name evidence="1" type="primary">syd</name>
    <name type="ordered locus">UTI89_C3163</name>
</gene>
<name>SYDP_ECOUT</name>